<accession>Q5E9P1</accession>
<accession>A4FV82</accession>
<evidence type="ECO:0000250" key="1">
    <source>
        <dbReference type="UniProtKB" id="Q6UWZ7"/>
    </source>
</evidence>
<evidence type="ECO:0000250" key="2">
    <source>
        <dbReference type="UniProtKB" id="Q8BPZ8"/>
    </source>
</evidence>
<evidence type="ECO:0000255" key="3"/>
<evidence type="ECO:0000255" key="4">
    <source>
        <dbReference type="PROSITE-ProRule" id="PRU01182"/>
    </source>
</evidence>
<evidence type="ECO:0000256" key="5">
    <source>
        <dbReference type="SAM" id="MobiDB-lite"/>
    </source>
</evidence>
<evidence type="ECO:0000305" key="6"/>
<dbReference type="EMBL" id="BT020879">
    <property type="protein sequence ID" value="AAX08896.1"/>
    <property type="molecule type" value="mRNA"/>
</dbReference>
<dbReference type="EMBL" id="BC123849">
    <property type="protein sequence ID" value="AAI23850.1"/>
    <property type="molecule type" value="mRNA"/>
</dbReference>
<dbReference type="RefSeq" id="NP_001015516.1">
    <property type="nucleotide sequence ID" value="NM_001015516.1"/>
</dbReference>
<dbReference type="SMR" id="Q5E9P1"/>
<dbReference type="FunCoup" id="Q5E9P1">
    <property type="interactions" value="2591"/>
</dbReference>
<dbReference type="STRING" id="9913.ENSBTAP00000018700"/>
<dbReference type="PaxDb" id="9913-ENSBTAP00000018700"/>
<dbReference type="GeneID" id="504796"/>
<dbReference type="KEGG" id="bta:504796"/>
<dbReference type="CTD" id="84142"/>
<dbReference type="VEuPathDB" id="HostDB:ENSBTAG00000014076"/>
<dbReference type="eggNOG" id="ENOG502QVCD">
    <property type="taxonomic scope" value="Eukaryota"/>
</dbReference>
<dbReference type="HOGENOM" id="CLU_056671_0_1_1"/>
<dbReference type="InParanoid" id="Q5E9P1"/>
<dbReference type="OMA" id="MEYAAFI"/>
<dbReference type="OrthoDB" id="6358435at2759"/>
<dbReference type="TreeFam" id="TF331751"/>
<dbReference type="Reactome" id="R-BTA-5689901">
    <property type="pathway name" value="Metalloprotease DUBs"/>
</dbReference>
<dbReference type="Reactome" id="R-BTA-5693565">
    <property type="pathway name" value="Recruitment and ATM-mediated phosphorylation of repair and signaling proteins at DNA double strand breaks"/>
</dbReference>
<dbReference type="Reactome" id="R-BTA-5693571">
    <property type="pathway name" value="Nonhomologous End-Joining (NHEJ)"/>
</dbReference>
<dbReference type="Reactome" id="R-BTA-5693607">
    <property type="pathway name" value="Processing of DNA double-strand break ends"/>
</dbReference>
<dbReference type="Reactome" id="R-BTA-69473">
    <property type="pathway name" value="G2/M DNA damage checkpoint"/>
</dbReference>
<dbReference type="Proteomes" id="UP000009136">
    <property type="component" value="Chromosome 6"/>
</dbReference>
<dbReference type="Bgee" id="ENSBTAG00000014076">
    <property type="expression patterns" value="Expressed in oocyte and 109 other cell types or tissues"/>
</dbReference>
<dbReference type="GO" id="GO:0070531">
    <property type="term" value="C:BRCA1-A complex"/>
    <property type="evidence" value="ECO:0000250"/>
    <property type="project" value="UniProtKB"/>
</dbReference>
<dbReference type="GO" id="GO:0005634">
    <property type="term" value="C:nucleus"/>
    <property type="evidence" value="ECO:0000250"/>
    <property type="project" value="UniProtKB"/>
</dbReference>
<dbReference type="GO" id="GO:0008017">
    <property type="term" value="F:microtubule binding"/>
    <property type="evidence" value="ECO:0000318"/>
    <property type="project" value="GO_Central"/>
</dbReference>
<dbReference type="GO" id="GO:0031593">
    <property type="term" value="F:polyubiquitin modification-dependent protein binding"/>
    <property type="evidence" value="ECO:0000250"/>
    <property type="project" value="UniProtKB"/>
</dbReference>
<dbReference type="GO" id="GO:0008608">
    <property type="term" value="P:attachment of spindle microtubules to kinetochore"/>
    <property type="evidence" value="ECO:0000318"/>
    <property type="project" value="GO_Central"/>
</dbReference>
<dbReference type="GO" id="GO:0006325">
    <property type="term" value="P:chromatin organization"/>
    <property type="evidence" value="ECO:0007669"/>
    <property type="project" value="UniProtKB-KW"/>
</dbReference>
<dbReference type="GO" id="GO:0006302">
    <property type="term" value="P:double-strand break repair"/>
    <property type="evidence" value="ECO:0000250"/>
    <property type="project" value="UniProtKB"/>
</dbReference>
<dbReference type="GO" id="GO:0007095">
    <property type="term" value="P:mitotic G2 DNA damage checkpoint signaling"/>
    <property type="evidence" value="ECO:0000250"/>
    <property type="project" value="UniProtKB"/>
</dbReference>
<dbReference type="GO" id="GO:0090307">
    <property type="term" value="P:mitotic spindle assembly"/>
    <property type="evidence" value="ECO:0000318"/>
    <property type="project" value="GO_Central"/>
</dbReference>
<dbReference type="GO" id="GO:0045739">
    <property type="term" value="P:positive regulation of DNA repair"/>
    <property type="evidence" value="ECO:0000250"/>
    <property type="project" value="UniProtKB"/>
</dbReference>
<dbReference type="GO" id="GO:0010212">
    <property type="term" value="P:response to ionizing radiation"/>
    <property type="evidence" value="ECO:0000250"/>
    <property type="project" value="UniProtKB"/>
</dbReference>
<dbReference type="CDD" id="cd23523">
    <property type="entry name" value="Abraxas_1"/>
    <property type="match status" value="1"/>
</dbReference>
<dbReference type="InterPro" id="IPR023239">
    <property type="entry name" value="BRISC_Abraxas1"/>
</dbReference>
<dbReference type="InterPro" id="IPR023238">
    <property type="entry name" value="FAM175"/>
</dbReference>
<dbReference type="InterPro" id="IPR037518">
    <property type="entry name" value="MPN"/>
</dbReference>
<dbReference type="PANTHER" id="PTHR31728">
    <property type="entry name" value="ABRAXAS FAMILY MEMBER"/>
    <property type="match status" value="1"/>
</dbReference>
<dbReference type="PANTHER" id="PTHR31728:SF2">
    <property type="entry name" value="BRCA1-A COMPLEX SUBUNIT ABRAXAS 1"/>
    <property type="match status" value="1"/>
</dbReference>
<dbReference type="Pfam" id="PF21125">
    <property type="entry name" value="MPN_2A_DUB_like"/>
    <property type="match status" value="1"/>
</dbReference>
<dbReference type="PRINTS" id="PR02052">
    <property type="entry name" value="ABRAXAS"/>
</dbReference>
<dbReference type="PRINTS" id="PR02051">
    <property type="entry name" value="PROTEINF175"/>
</dbReference>
<dbReference type="PROSITE" id="PS50249">
    <property type="entry name" value="MPN"/>
    <property type="match status" value="1"/>
</dbReference>
<name>ABRX1_BOVIN</name>
<gene>
    <name evidence="1" type="primary">ABRAXAS1</name>
    <name type="synonym">ABRA1</name>
    <name type="synonym">CCDC98</name>
    <name type="synonym">FAM175A</name>
</gene>
<organism>
    <name type="scientific">Bos taurus</name>
    <name type="common">Bovine</name>
    <dbReference type="NCBI Taxonomy" id="9913"/>
    <lineage>
        <taxon>Eukaryota</taxon>
        <taxon>Metazoa</taxon>
        <taxon>Chordata</taxon>
        <taxon>Craniata</taxon>
        <taxon>Vertebrata</taxon>
        <taxon>Euteleostomi</taxon>
        <taxon>Mammalia</taxon>
        <taxon>Eutheria</taxon>
        <taxon>Laurasiatheria</taxon>
        <taxon>Artiodactyla</taxon>
        <taxon>Ruminantia</taxon>
        <taxon>Pecora</taxon>
        <taxon>Bovidae</taxon>
        <taxon>Bovinae</taxon>
        <taxon>Bos</taxon>
    </lineage>
</organism>
<keyword id="KW-0156">Chromatin regulator</keyword>
<keyword id="KW-0175">Coiled coil</keyword>
<keyword id="KW-0227">DNA damage</keyword>
<keyword id="KW-0234">DNA repair</keyword>
<keyword id="KW-0539">Nucleus</keyword>
<keyword id="KW-0597">Phosphoprotein</keyword>
<keyword id="KW-1185">Reference proteome</keyword>
<reference key="1">
    <citation type="journal article" date="2005" name="BMC Genomics">
        <title>Characterization of 954 bovine full-CDS cDNA sequences.</title>
        <authorList>
            <person name="Harhay G.P."/>
            <person name="Sonstegard T.S."/>
            <person name="Keele J.W."/>
            <person name="Heaton M.P."/>
            <person name="Clawson M.L."/>
            <person name="Snelling W.M."/>
            <person name="Wiedmann R.T."/>
            <person name="Van Tassell C.P."/>
            <person name="Smith T.P.L."/>
        </authorList>
    </citation>
    <scope>NUCLEOTIDE SEQUENCE [LARGE SCALE MRNA]</scope>
</reference>
<reference key="2">
    <citation type="submission" date="2006-09" db="EMBL/GenBank/DDBJ databases">
        <authorList>
            <consortium name="NIH - Mammalian Gene Collection (MGC) project"/>
        </authorList>
    </citation>
    <scope>NUCLEOTIDE SEQUENCE [LARGE SCALE MRNA]</scope>
    <source>
        <strain>Hereford</strain>
        <tissue>Fetal skin</tissue>
    </source>
</reference>
<comment type="function">
    <text evidence="1">Involved in DNA damage response and double-strand break (DSB) repair. Component of the BRCA1-A complex, acting as a central scaffold protein that assembles the various components of the complex and mediates the recruitment of BRCA1. The BRCA1-A complex specifically recognizes 'Lys-63'-linked ubiquitinated histones H2A and H2AX at DNA lesion sites, leading to target the BRCA1-BARD1 heterodimer to sites of DNA damage at DSBs. This complex also possesses deubiquitinase activity that specifically removes 'Lys-63'-linked ubiquitin on histones H2A and H2AX.</text>
</comment>
<comment type="subunit">
    <text evidence="1">Component of the ARISC complex, at least composed of UIMC1/RAP80, ABRAXAS1, BRCC3/BRCC36, BABAM2 and BABAM1/NBA1. Component of the BRCA1-A complex, at least composed of the BRCA1, BARD1, UIMC1/RAP80, ABRAXAS1, BRCC3/BRCC36, BABAM2 and BABAM1/NBA1. In the complex, interacts directly with UIMC1/RAP80, BRCC3/BRCC36 and BABAM2. Homodimer. Interacts directly (when phosphorylated at Ser-407) with BRCA1. The phosphorylated homodimer can interact directly with two BRCA1 chains, giving rise to a heterotetramer. Binds polyubiquitin.</text>
</comment>
<comment type="subcellular location">
    <subcellularLocation>
        <location evidence="1">Nucleus</location>
    </subcellularLocation>
    <text evidence="1">Localizes at sites of DNA damage at double-strand breaks (DSBs).</text>
</comment>
<comment type="PTM">
    <text evidence="1">Phosphorylation of Ser-407 of the pSXXF motif by ATM or ATR constitutes a specific recognition motif for the BRCT domain of BRCA1.</text>
</comment>
<comment type="similarity">
    <text evidence="6">Belongs to the FAM175 family. Abraxas subfamily.</text>
</comment>
<feature type="chain" id="PRO_0000278574" description="BRCA1-A complex subunit Abraxas 1">
    <location>
        <begin position="1"/>
        <end position="410"/>
    </location>
</feature>
<feature type="domain" description="MPN" evidence="4">
    <location>
        <begin position="7"/>
        <end position="160"/>
    </location>
</feature>
<feature type="region of interest" description="Disordered" evidence="5">
    <location>
        <begin position="354"/>
        <end position="410"/>
    </location>
</feature>
<feature type="coiled-coil region" evidence="3">
    <location>
        <begin position="208"/>
        <end position="261"/>
    </location>
</feature>
<feature type="short sequence motif" description="pSXXF motif" evidence="6">
    <location>
        <begin position="407"/>
        <end position="410"/>
    </location>
</feature>
<feature type="compositionally biased region" description="Polar residues" evidence="5">
    <location>
        <begin position="368"/>
        <end position="389"/>
    </location>
</feature>
<feature type="modified residue" description="Phosphoserine" evidence="2">
    <location>
        <position position="48"/>
    </location>
</feature>
<feature type="modified residue" description="Phosphoserine" evidence="1">
    <location>
        <position position="387"/>
    </location>
</feature>
<feature type="modified residue" description="Phosphoserine" evidence="1">
    <location>
        <position position="388"/>
    </location>
</feature>
<feature type="modified residue" description="Phosphothreonine" evidence="1">
    <location>
        <position position="391"/>
    </location>
</feature>
<feature type="modified residue" description="Phosphoserine" evidence="1">
    <location>
        <position position="407"/>
    </location>
</feature>
<protein>
    <recommendedName>
        <fullName evidence="1">BRCA1-A complex subunit Abraxas 1</fullName>
    </recommendedName>
    <alternativeName>
        <fullName>Coiled-coil domain-containing protein 98</fullName>
    </alternativeName>
    <alternativeName>
        <fullName>Protein FAM175A</fullName>
    </alternativeName>
</protein>
<sequence>MEGESTTAVLSGFVLGALAFQHLNTDSDTEGFLLGEVKGEAKNSITDSQMDDVEVIYTIDIQKYISCYQLFSFYNSSGEVNEQALKKILSNVKKDVVGWYKLRRHSDQIMTFRERLLHRNLQQHLSSQELVFLLLTPSIITESCSTHRLEHALYKPQKGLFHRIPLVVANLGMSEQLGYKTTSGSCTSAGFSRAVKTHSSEFFKEDGSLKEVQKINEMYTSLQDELKSICEKVEHSERAVEKLLNDVNRLKGEIKKRKQAQMQATREKNVQKDPQENILLCQALRTFFPDCELLHSCVISLKNRRISGSSCTTTHPLSGVDNLTLMVEYTDFPEASPARSALLVTKRKASDTDDGWQFKKSRLGGIQNRPSKTDTNSSNQEQASTVSSPETDEEIERMKGSGEYPQSPTF</sequence>
<proteinExistence type="evidence at transcript level"/>